<comment type="function">
    <text evidence="1">Catalyzes the formation of phosphatidylethanolamine (PtdEtn) from phosphatidylserine (PtdSer).</text>
</comment>
<comment type="catalytic activity">
    <reaction evidence="1">
        <text>a 1,2-diacyl-sn-glycero-3-phospho-L-serine + H(+) = a 1,2-diacyl-sn-glycero-3-phosphoethanolamine + CO2</text>
        <dbReference type="Rhea" id="RHEA:20828"/>
        <dbReference type="ChEBI" id="CHEBI:15378"/>
        <dbReference type="ChEBI" id="CHEBI:16526"/>
        <dbReference type="ChEBI" id="CHEBI:57262"/>
        <dbReference type="ChEBI" id="CHEBI:64612"/>
        <dbReference type="EC" id="4.1.1.65"/>
    </reaction>
</comment>
<comment type="cofactor">
    <cofactor evidence="1">
        <name>pyruvate</name>
        <dbReference type="ChEBI" id="CHEBI:15361"/>
    </cofactor>
    <text evidence="1">Binds 1 pyruvoyl group covalently per subunit.</text>
</comment>
<comment type="pathway">
    <text evidence="1">Phospholipid metabolism; phosphatidylethanolamine biosynthesis; phosphatidylethanolamine from CDP-diacylglycerol: step 2/2.</text>
</comment>
<comment type="subunit">
    <text evidence="1">Heterodimer of a large membrane-associated beta subunit and a small pyruvoyl-containing alpha subunit.</text>
</comment>
<comment type="subcellular location">
    <subcellularLocation>
        <location evidence="1">Cell membrane</location>
        <topology evidence="1">Peripheral membrane protein</topology>
    </subcellularLocation>
</comment>
<comment type="PTM">
    <text evidence="1">Is synthesized initially as an inactive proenzyme. Formation of the active enzyme involves a self-maturation process in which the active site pyruvoyl group is generated from an internal serine residue via an autocatalytic post-translational modification. Two non-identical subunits are generated from the proenzyme in this reaction, and the pyruvate is formed at the N-terminus of the alpha chain, which is derived from the carboxyl end of the proenzyme. The post-translation cleavage follows an unusual pathway, termed non-hydrolytic serinolysis, in which the side chain hydroxyl group of the serine supplies its oxygen atom to form the C-terminus of the beta chain, while the remainder of the serine residue undergoes an oxidative deamination to produce ammonia and the pyruvoyl prosthetic group on the alpha chain.</text>
</comment>
<comment type="similarity">
    <text evidence="1">Belongs to the phosphatidylserine decarboxylase family. PSD-A subfamily.</text>
</comment>
<organism>
    <name type="scientific">Nitrobacter hamburgensis (strain DSM 10229 / NCIMB 13809 / X14)</name>
    <dbReference type="NCBI Taxonomy" id="323097"/>
    <lineage>
        <taxon>Bacteria</taxon>
        <taxon>Pseudomonadati</taxon>
        <taxon>Pseudomonadota</taxon>
        <taxon>Alphaproteobacteria</taxon>
        <taxon>Hyphomicrobiales</taxon>
        <taxon>Nitrobacteraceae</taxon>
        <taxon>Nitrobacter</taxon>
    </lineage>
</organism>
<protein>
    <recommendedName>
        <fullName evidence="1">Phosphatidylserine decarboxylase proenzyme</fullName>
        <ecNumber evidence="1">4.1.1.65</ecNumber>
    </recommendedName>
    <component>
        <recommendedName>
            <fullName evidence="1">Phosphatidylserine decarboxylase alpha chain</fullName>
        </recommendedName>
    </component>
    <component>
        <recommendedName>
            <fullName evidence="1">Phosphatidylserine decarboxylase beta chain</fullName>
        </recommendedName>
    </component>
</protein>
<reference key="1">
    <citation type="submission" date="2006-03" db="EMBL/GenBank/DDBJ databases">
        <title>Complete sequence of chromosome of Nitrobacter hamburgensis X14.</title>
        <authorList>
            <consortium name="US DOE Joint Genome Institute"/>
            <person name="Copeland A."/>
            <person name="Lucas S."/>
            <person name="Lapidus A."/>
            <person name="Barry K."/>
            <person name="Detter J.C."/>
            <person name="Glavina del Rio T."/>
            <person name="Hammon N."/>
            <person name="Israni S."/>
            <person name="Dalin E."/>
            <person name="Tice H."/>
            <person name="Pitluck S."/>
            <person name="Chain P."/>
            <person name="Malfatti S."/>
            <person name="Shin M."/>
            <person name="Vergez L."/>
            <person name="Schmutz J."/>
            <person name="Larimer F."/>
            <person name="Land M."/>
            <person name="Hauser L."/>
            <person name="Kyrpides N."/>
            <person name="Ivanova N."/>
            <person name="Ward B."/>
            <person name="Arp D."/>
            <person name="Klotz M."/>
            <person name="Stein L."/>
            <person name="O'Mullan G."/>
            <person name="Starkenburg S."/>
            <person name="Sayavedra L."/>
            <person name="Poret-Peterson A.T."/>
            <person name="Gentry M.E."/>
            <person name="Bruce D."/>
            <person name="Richardson P."/>
        </authorList>
    </citation>
    <scope>NUCLEOTIDE SEQUENCE [LARGE SCALE GENOMIC DNA]</scope>
    <source>
        <strain>DSM 10229 / NCIMB 13809 / X14</strain>
    </source>
</reference>
<name>PSD_NITHX</name>
<accession>Q1QN82</accession>
<sequence>MSIDRQTLLSVAKSIRSGAKSIRAQISPIHPKGYPFVGGFALASIILFWIWTPLGWIGTLLTIWCALFFRNPARVTPVREGLVVSPADGRISMIAPVVPPAELELGEQPMVRISIFMSVFNCHVNRSPVAGKIERIVYRPGKFINAELDKASEDNERNSLVISTPNNGLVGVVQIAGLVARRIVTFVHDGQTLETGERFGLIRFGSRLDVFLPEGTQLLVSEGQTAIAGETVLADFQQADGGRTYRSN</sequence>
<feature type="chain" id="PRO_0000262233" description="Phosphatidylserine decarboxylase beta chain" evidence="1">
    <location>
        <begin position="1"/>
        <end position="205"/>
    </location>
</feature>
<feature type="chain" id="PRO_0000262234" description="Phosphatidylserine decarboxylase alpha chain" evidence="1">
    <location>
        <begin position="206"/>
        <end position="248"/>
    </location>
</feature>
<feature type="active site" description="Schiff-base intermediate with substrate; via pyruvic acid" evidence="1">
    <location>
        <position position="206"/>
    </location>
</feature>
<feature type="site" description="Cleavage (non-hydrolytic); by autocatalysis" evidence="1">
    <location>
        <begin position="205"/>
        <end position="206"/>
    </location>
</feature>
<feature type="modified residue" description="Pyruvic acid (Ser); by autocatalysis" evidence="1">
    <location>
        <position position="206"/>
    </location>
</feature>
<gene>
    <name evidence="1" type="primary">psd</name>
    <name type="ordered locus">Nham_1493</name>
</gene>
<evidence type="ECO:0000255" key="1">
    <source>
        <dbReference type="HAMAP-Rule" id="MF_00664"/>
    </source>
</evidence>
<keyword id="KW-1003">Cell membrane</keyword>
<keyword id="KW-0210">Decarboxylase</keyword>
<keyword id="KW-0444">Lipid biosynthesis</keyword>
<keyword id="KW-0443">Lipid metabolism</keyword>
<keyword id="KW-0456">Lyase</keyword>
<keyword id="KW-0472">Membrane</keyword>
<keyword id="KW-0594">Phospholipid biosynthesis</keyword>
<keyword id="KW-1208">Phospholipid metabolism</keyword>
<keyword id="KW-0670">Pyruvate</keyword>
<keyword id="KW-1185">Reference proteome</keyword>
<keyword id="KW-0865">Zymogen</keyword>
<dbReference type="EC" id="4.1.1.65" evidence="1"/>
<dbReference type="EMBL" id="CP000319">
    <property type="protein sequence ID" value="ABE62315.1"/>
    <property type="molecule type" value="Genomic_DNA"/>
</dbReference>
<dbReference type="RefSeq" id="WP_011510005.1">
    <property type="nucleotide sequence ID" value="NC_007964.1"/>
</dbReference>
<dbReference type="STRING" id="323097.Nham_1493"/>
<dbReference type="KEGG" id="nha:Nham_1493"/>
<dbReference type="eggNOG" id="COG0688">
    <property type="taxonomic scope" value="Bacteria"/>
</dbReference>
<dbReference type="HOGENOM" id="CLU_072492_0_0_5"/>
<dbReference type="OrthoDB" id="9790893at2"/>
<dbReference type="UniPathway" id="UPA00558">
    <property type="reaction ID" value="UER00616"/>
</dbReference>
<dbReference type="Proteomes" id="UP000001953">
    <property type="component" value="Chromosome"/>
</dbReference>
<dbReference type="GO" id="GO:0005886">
    <property type="term" value="C:plasma membrane"/>
    <property type="evidence" value="ECO:0007669"/>
    <property type="project" value="UniProtKB-SubCell"/>
</dbReference>
<dbReference type="GO" id="GO:0004609">
    <property type="term" value="F:phosphatidylserine decarboxylase activity"/>
    <property type="evidence" value="ECO:0007669"/>
    <property type="project" value="UniProtKB-UniRule"/>
</dbReference>
<dbReference type="GO" id="GO:0006646">
    <property type="term" value="P:phosphatidylethanolamine biosynthetic process"/>
    <property type="evidence" value="ECO:0007669"/>
    <property type="project" value="UniProtKB-UniRule"/>
</dbReference>
<dbReference type="HAMAP" id="MF_00664">
    <property type="entry name" value="PS_decarb_PSD_A"/>
    <property type="match status" value="1"/>
</dbReference>
<dbReference type="InterPro" id="IPR003817">
    <property type="entry name" value="PS_Dcarbxylase"/>
</dbReference>
<dbReference type="InterPro" id="IPR033175">
    <property type="entry name" value="PSD-A"/>
</dbReference>
<dbReference type="NCBIfam" id="NF003677">
    <property type="entry name" value="PRK05305.1-1"/>
    <property type="match status" value="1"/>
</dbReference>
<dbReference type="NCBIfam" id="NF003678">
    <property type="entry name" value="PRK05305.1-2"/>
    <property type="match status" value="1"/>
</dbReference>
<dbReference type="NCBIfam" id="NF003679">
    <property type="entry name" value="PRK05305.1-3"/>
    <property type="match status" value="1"/>
</dbReference>
<dbReference type="NCBIfam" id="NF003685">
    <property type="entry name" value="PRK05305.2-5"/>
    <property type="match status" value="1"/>
</dbReference>
<dbReference type="PANTHER" id="PTHR35809">
    <property type="entry name" value="ARCHAETIDYLSERINE DECARBOXYLASE PROENZYME-RELATED"/>
    <property type="match status" value="1"/>
</dbReference>
<dbReference type="PANTHER" id="PTHR35809:SF1">
    <property type="entry name" value="ARCHAETIDYLSERINE DECARBOXYLASE PROENZYME-RELATED"/>
    <property type="match status" value="1"/>
</dbReference>
<dbReference type="Pfam" id="PF02666">
    <property type="entry name" value="PS_Dcarbxylase"/>
    <property type="match status" value="1"/>
</dbReference>
<proteinExistence type="inferred from homology"/>